<sequence>MTLDLAAFARDKSIKYFMISYTDLFGGQRAKLVPAEAIADMQKDGAGFAGFATWLDLTPAHPDLFAVPDASSVIQLPWKKDVAWVAADCVMDDRPVEQAPRVVLKRLVAEAAKEGLRVKTGVEPEFFLISADGSVISDQFDTAEKPCYDQQAVMRRYDVIAEICDYMLELGWKPYQNDHEDANGQFEMNWEYDDVLKTADKHSFFKFMVKSVAEKHGLRATFMPKPFKGLTGNGCHAHISVWDVDGRVNAFADKEMAFGLSAQGKTFLGGIMKHAPALAAITNPTVNSYKRINAPRTTSGATWSPNTVTWTGNNRTHMVRVPGPGRFELRLPDGAVNPYLLQAIIIAAGLEGIRSQADPGQHYDIDMYAEGHLVKDAPRLPLNLLDALRAFDADEGLKAAIGAEFSSAYLKLKHLEWNAYCSHFTQWERDSTLDI</sequence>
<feature type="chain" id="PRO_0000153279" description="Glutamine synthetase">
    <location>
        <begin position="1"/>
        <end position="435"/>
    </location>
</feature>
<feature type="domain" description="GS beta-grasp" evidence="6">
    <location>
        <begin position="12"/>
        <end position="94"/>
    </location>
</feature>
<feature type="domain" description="GS catalytic" evidence="7">
    <location>
        <begin position="100"/>
        <end position="435"/>
    </location>
</feature>
<feature type="binding site" evidence="3">
    <location>
        <position position="123"/>
    </location>
    <ligand>
        <name>Mg(2+)</name>
        <dbReference type="ChEBI" id="CHEBI:18420"/>
        <label>1</label>
    </ligand>
</feature>
<feature type="binding site" evidence="3">
    <location>
        <position position="125"/>
    </location>
    <ligand>
        <name>Mg(2+)</name>
        <dbReference type="ChEBI" id="CHEBI:18420"/>
        <label>2</label>
    </ligand>
</feature>
<feature type="binding site" evidence="3">
    <location>
        <position position="180"/>
    </location>
    <ligand>
        <name>Mg(2+)</name>
        <dbReference type="ChEBI" id="CHEBI:18420"/>
        <label>2</label>
    </ligand>
</feature>
<feature type="binding site" evidence="3">
    <location>
        <position position="187"/>
    </location>
    <ligand>
        <name>Mg(2+)</name>
        <dbReference type="ChEBI" id="CHEBI:18420"/>
        <label>2</label>
    </ligand>
</feature>
<feature type="binding site" evidence="3">
    <location>
        <position position="232"/>
    </location>
    <ligand>
        <name>L-glutamate</name>
        <dbReference type="ChEBI" id="CHEBI:29985"/>
    </ligand>
</feature>
<feature type="binding site" evidence="3">
    <location>
        <position position="236"/>
    </location>
    <ligand>
        <name>Mg(2+)</name>
        <dbReference type="ChEBI" id="CHEBI:18420"/>
        <label>1</label>
    </ligand>
</feature>
<feature type="binding site" evidence="4">
    <location>
        <position position="240"/>
    </location>
    <ligand>
        <name>ATP</name>
        <dbReference type="ChEBI" id="CHEBI:30616"/>
    </ligand>
</feature>
<feature type="binding site" evidence="2">
    <location>
        <position position="291"/>
    </location>
    <ligand>
        <name>L-glutamate</name>
        <dbReference type="ChEBI" id="CHEBI:29985"/>
    </ligand>
</feature>
<feature type="binding site" evidence="5">
    <location>
        <position position="315"/>
    </location>
    <ligand>
        <name>ATP</name>
        <dbReference type="ChEBI" id="CHEBI:30616"/>
    </ligand>
</feature>
<feature type="binding site" evidence="5">
    <location>
        <position position="315"/>
    </location>
    <ligand>
        <name>L-glutamate</name>
        <dbReference type="ChEBI" id="CHEBI:29985"/>
    </ligand>
</feature>
<feature type="binding site" evidence="5">
    <location>
        <position position="320"/>
    </location>
    <ligand>
        <name>ATP</name>
        <dbReference type="ChEBI" id="CHEBI:30616"/>
    </ligand>
</feature>
<feature type="binding site" evidence="3">
    <location>
        <position position="328"/>
    </location>
    <ligand>
        <name>Mg(2+)</name>
        <dbReference type="ChEBI" id="CHEBI:18420"/>
        <label>1</label>
    </ligand>
</feature>
<feature type="binding site" evidence="2">
    <location>
        <position position="330"/>
    </location>
    <ligand>
        <name>L-glutamate</name>
        <dbReference type="ChEBI" id="CHEBI:29985"/>
    </ligand>
</feature>
<accession>P31592</accession>
<gene>
    <name evidence="8" type="primary">glnT</name>
</gene>
<name>GLNA3_RHILP</name>
<dbReference type="EC" id="6.3.1.2" evidence="1"/>
<dbReference type="EMBL" id="S48357">
    <property type="protein sequence ID" value="AAB23489.1"/>
    <property type="molecule type" value="Genomic_DNA"/>
</dbReference>
<dbReference type="PIR" id="JC1301">
    <property type="entry name" value="JC1301"/>
</dbReference>
<dbReference type="SMR" id="P31592"/>
<dbReference type="GO" id="GO:0005524">
    <property type="term" value="F:ATP binding"/>
    <property type="evidence" value="ECO:0007669"/>
    <property type="project" value="UniProtKB-KW"/>
</dbReference>
<dbReference type="GO" id="GO:0004356">
    <property type="term" value="F:glutamine synthetase activity"/>
    <property type="evidence" value="ECO:0007669"/>
    <property type="project" value="UniProtKB-EC"/>
</dbReference>
<dbReference type="GO" id="GO:0046872">
    <property type="term" value="F:metal ion binding"/>
    <property type="evidence" value="ECO:0007669"/>
    <property type="project" value="UniProtKB-KW"/>
</dbReference>
<dbReference type="GO" id="GO:0006542">
    <property type="term" value="P:glutamine biosynthetic process"/>
    <property type="evidence" value="ECO:0007669"/>
    <property type="project" value="InterPro"/>
</dbReference>
<dbReference type="GO" id="GO:0009399">
    <property type="term" value="P:nitrogen fixation"/>
    <property type="evidence" value="ECO:0007669"/>
    <property type="project" value="UniProtKB-KW"/>
</dbReference>
<dbReference type="Gene3D" id="3.10.20.70">
    <property type="entry name" value="Glutamine synthetase, N-terminal domain"/>
    <property type="match status" value="1"/>
</dbReference>
<dbReference type="Gene3D" id="3.30.590.10">
    <property type="entry name" value="Glutamine synthetase/guanido kinase, catalytic domain"/>
    <property type="match status" value="1"/>
</dbReference>
<dbReference type="InterPro" id="IPR008147">
    <property type="entry name" value="Gln_synt_N"/>
</dbReference>
<dbReference type="InterPro" id="IPR036651">
    <property type="entry name" value="Gln_synt_N_sf"/>
</dbReference>
<dbReference type="InterPro" id="IPR014746">
    <property type="entry name" value="Gln_synth/guanido_kin_cat_dom"/>
</dbReference>
<dbReference type="InterPro" id="IPR008146">
    <property type="entry name" value="Gln_synth_cat_dom"/>
</dbReference>
<dbReference type="InterPro" id="IPR027303">
    <property type="entry name" value="Gln_synth_gly_rich_site"/>
</dbReference>
<dbReference type="InterPro" id="IPR017536">
    <property type="entry name" value="Glutamine_synthetase_typeIII"/>
</dbReference>
<dbReference type="NCBIfam" id="TIGR03105">
    <property type="entry name" value="gln_synth_III"/>
    <property type="match status" value="1"/>
</dbReference>
<dbReference type="PANTHER" id="PTHR43785">
    <property type="entry name" value="GAMMA-GLUTAMYLPUTRESCINE SYNTHETASE"/>
    <property type="match status" value="1"/>
</dbReference>
<dbReference type="PANTHER" id="PTHR43785:SF14">
    <property type="entry name" value="GLUTAMINE SYNTHETASE"/>
    <property type="match status" value="1"/>
</dbReference>
<dbReference type="Pfam" id="PF00120">
    <property type="entry name" value="Gln-synt_C"/>
    <property type="match status" value="1"/>
</dbReference>
<dbReference type="SMART" id="SM01230">
    <property type="entry name" value="Gln-synt_C"/>
    <property type="match status" value="1"/>
</dbReference>
<dbReference type="SUPFAM" id="SSF54368">
    <property type="entry name" value="Glutamine synthetase, N-terminal domain"/>
    <property type="match status" value="1"/>
</dbReference>
<dbReference type="SUPFAM" id="SSF55931">
    <property type="entry name" value="Glutamine synthetase/guanido kinase"/>
    <property type="match status" value="1"/>
</dbReference>
<dbReference type="PROSITE" id="PS00181">
    <property type="entry name" value="GLNA_ATP"/>
    <property type="match status" value="1"/>
</dbReference>
<dbReference type="PROSITE" id="PS51986">
    <property type="entry name" value="GS_BETA_GRASP"/>
    <property type="match status" value="1"/>
</dbReference>
<dbReference type="PROSITE" id="PS51987">
    <property type="entry name" value="GS_CATALYTIC"/>
    <property type="match status" value="1"/>
</dbReference>
<organism>
    <name type="scientific">Rhizobium leguminosarum bv. phaseoli</name>
    <dbReference type="NCBI Taxonomy" id="385"/>
    <lineage>
        <taxon>Bacteria</taxon>
        <taxon>Pseudomonadati</taxon>
        <taxon>Pseudomonadota</taxon>
        <taxon>Alphaproteobacteria</taxon>
        <taxon>Hyphomicrobiales</taxon>
        <taxon>Rhizobiaceae</taxon>
        <taxon>Rhizobium/Agrobacterium group</taxon>
        <taxon>Rhizobium</taxon>
    </lineage>
</organism>
<evidence type="ECO:0000250" key="1">
    <source>
        <dbReference type="UniProtKB" id="O87393"/>
    </source>
</evidence>
<evidence type="ECO:0000250" key="2">
    <source>
        <dbReference type="UniProtKB" id="P0A1P6"/>
    </source>
</evidence>
<evidence type="ECO:0000250" key="3">
    <source>
        <dbReference type="UniProtKB" id="P12425"/>
    </source>
</evidence>
<evidence type="ECO:0000250" key="4">
    <source>
        <dbReference type="UniProtKB" id="P77961"/>
    </source>
</evidence>
<evidence type="ECO:0000250" key="5">
    <source>
        <dbReference type="UniProtKB" id="P9WN39"/>
    </source>
</evidence>
<evidence type="ECO:0000255" key="6">
    <source>
        <dbReference type="PROSITE-ProRule" id="PRU01330"/>
    </source>
</evidence>
<evidence type="ECO:0000255" key="7">
    <source>
        <dbReference type="PROSITE-ProRule" id="PRU01331"/>
    </source>
</evidence>
<evidence type="ECO:0000303" key="8">
    <source>
    </source>
</evidence>
<evidence type="ECO:0000305" key="9"/>
<keyword id="KW-0067">ATP-binding</keyword>
<keyword id="KW-0903">Direct protein sequencing</keyword>
<keyword id="KW-0436">Ligase</keyword>
<keyword id="KW-0460">Magnesium</keyword>
<keyword id="KW-0479">Metal-binding</keyword>
<keyword id="KW-0535">Nitrogen fixation</keyword>
<keyword id="KW-0547">Nucleotide-binding</keyword>
<comment type="function">
    <text evidence="1">Catalyzes the ATP-dependent biosynthesis of glutamine from glutamate and ammonia.</text>
</comment>
<comment type="catalytic activity">
    <reaction evidence="1">
        <text>L-glutamate + NH4(+) + ATP = L-glutamine + ADP + phosphate + H(+)</text>
        <dbReference type="Rhea" id="RHEA:16169"/>
        <dbReference type="ChEBI" id="CHEBI:15378"/>
        <dbReference type="ChEBI" id="CHEBI:28938"/>
        <dbReference type="ChEBI" id="CHEBI:29985"/>
        <dbReference type="ChEBI" id="CHEBI:30616"/>
        <dbReference type="ChEBI" id="CHEBI:43474"/>
        <dbReference type="ChEBI" id="CHEBI:58359"/>
        <dbReference type="ChEBI" id="CHEBI:456216"/>
        <dbReference type="EC" id="6.3.1.2"/>
    </reaction>
</comment>
<comment type="cofactor">
    <cofactor evidence="1">
        <name>Mg(2+)</name>
        <dbReference type="ChEBI" id="CHEBI:18420"/>
    </cofactor>
    <text evidence="3">Binds 2 Mg(2+) ions per subunit.</text>
</comment>
<comment type="subunit">
    <text evidence="1">Homooctamer.</text>
</comment>
<comment type="miscellaneous">
    <text evidence="9">Two forms of glutamine synthetase (GSII and GSIII) can be found in this nitrogen fixing bacteria, GSII is a typical eukaryotic glutamine synthetase whereas GSIII is a divergent type with very low sequence similarity to the type I and II enzymes.</text>
</comment>
<comment type="similarity">
    <text evidence="9">Belongs to the glutamine synthetase family.</text>
</comment>
<proteinExistence type="evidence at protein level"/>
<reference key="1">
    <citation type="journal article" date="1992" name="Gene">
        <title>The Rhizobium leguminosarum biovar phaseoli glnT gene, encoding glutamine synthetase III.</title>
        <authorList>
            <person name="Chiurazzi M."/>
            <person name="Meza R."/>
            <person name="Lara M."/>
            <person name="Lahm A."/>
            <person name="Defez R."/>
            <person name="Iaccarino M."/>
            <person name="Espin G."/>
        </authorList>
    </citation>
    <scope>NUCLEOTIDE SEQUENCE [GENOMIC DNA]</scope>
    <scope>PROTEIN SEQUENCE OF 1-8</scope>
</reference>
<protein>
    <recommendedName>
        <fullName evidence="8">Glutamine synthetase</fullName>
        <shortName evidence="8">GS</shortName>
        <ecNumber evidence="1">6.3.1.2</ecNumber>
    </recommendedName>
    <alternativeName>
        <fullName evidence="9">Glutamate--ammonia ligase</fullName>
    </alternativeName>
    <alternativeName>
        <fullName evidence="8">Glutamine synthetase III</fullName>
        <shortName evidence="9">GSIII</shortName>
    </alternativeName>
</protein>